<keyword id="KW-0067">ATP-binding</keyword>
<keyword id="KW-0963">Cytoplasm</keyword>
<keyword id="KW-0547">Nucleotide-binding</keyword>
<keyword id="KW-1185">Reference proteome</keyword>
<keyword id="KW-0694">RNA-binding</keyword>
<keyword id="KW-0784">Thiamine biosynthesis</keyword>
<keyword id="KW-0808">Transferase</keyword>
<keyword id="KW-0820">tRNA-binding</keyword>
<feature type="chain" id="PRO_0000154870" description="Probable tRNA sulfurtransferase">
    <location>
        <begin position="1"/>
        <end position="407"/>
    </location>
</feature>
<feature type="domain" description="THUMP" evidence="1">
    <location>
        <begin position="61"/>
        <end position="165"/>
    </location>
</feature>
<feature type="binding site" evidence="1">
    <location>
        <begin position="183"/>
        <end position="184"/>
    </location>
    <ligand>
        <name>ATP</name>
        <dbReference type="ChEBI" id="CHEBI:30616"/>
    </ligand>
</feature>
<feature type="binding site" evidence="1">
    <location>
        <begin position="208"/>
        <end position="209"/>
    </location>
    <ligand>
        <name>ATP</name>
        <dbReference type="ChEBI" id="CHEBI:30616"/>
    </ligand>
</feature>
<feature type="binding site" evidence="1">
    <location>
        <position position="265"/>
    </location>
    <ligand>
        <name>ATP</name>
        <dbReference type="ChEBI" id="CHEBI:30616"/>
    </ligand>
</feature>
<feature type="binding site" evidence="1">
    <location>
        <position position="287"/>
    </location>
    <ligand>
        <name>ATP</name>
        <dbReference type="ChEBI" id="CHEBI:30616"/>
    </ligand>
</feature>
<feature type="binding site" evidence="1">
    <location>
        <position position="296"/>
    </location>
    <ligand>
        <name>ATP</name>
        <dbReference type="ChEBI" id="CHEBI:30616"/>
    </ligand>
</feature>
<reference key="1">
    <citation type="journal article" date="2005" name="J. Bacteriol.">
        <title>Insights on evolution of virulence and resistance from the complete genome analysis of an early methicillin-resistant Staphylococcus aureus strain and a biofilm-producing methicillin-resistant Staphylococcus epidermidis strain.</title>
        <authorList>
            <person name="Gill S.R."/>
            <person name="Fouts D.E."/>
            <person name="Archer G.L."/>
            <person name="Mongodin E.F."/>
            <person name="DeBoy R.T."/>
            <person name="Ravel J."/>
            <person name="Paulsen I.T."/>
            <person name="Kolonay J.F."/>
            <person name="Brinkac L.M."/>
            <person name="Beanan M.J."/>
            <person name="Dodson R.J."/>
            <person name="Daugherty S.C."/>
            <person name="Madupu R."/>
            <person name="Angiuoli S.V."/>
            <person name="Durkin A.S."/>
            <person name="Haft D.H."/>
            <person name="Vamathevan J.J."/>
            <person name="Khouri H."/>
            <person name="Utterback T.R."/>
            <person name="Lee C."/>
            <person name="Dimitrov G."/>
            <person name="Jiang L."/>
            <person name="Qin H."/>
            <person name="Weidman J."/>
            <person name="Tran K."/>
            <person name="Kang K.H."/>
            <person name="Hance I.R."/>
            <person name="Nelson K.E."/>
            <person name="Fraser C.M."/>
        </authorList>
    </citation>
    <scope>NUCLEOTIDE SEQUENCE [LARGE SCALE GENOMIC DNA]</scope>
    <source>
        <strain>ATCC 35984 / DSM 28319 / BCRC 17069 / CCUG 31568 / BM 3577 / RP62A</strain>
    </source>
</reference>
<dbReference type="EC" id="2.8.1.4" evidence="1"/>
<dbReference type="EMBL" id="CP000029">
    <property type="protein sequence ID" value="AAW54673.1"/>
    <property type="molecule type" value="Genomic_DNA"/>
</dbReference>
<dbReference type="RefSeq" id="WP_001830758.1">
    <property type="nucleotide sequence ID" value="NC_002976.3"/>
</dbReference>
<dbReference type="SMR" id="Q5HNJ0"/>
<dbReference type="STRING" id="176279.SERP1279"/>
<dbReference type="GeneID" id="50018496"/>
<dbReference type="KEGG" id="ser:SERP1279"/>
<dbReference type="eggNOG" id="COG0301">
    <property type="taxonomic scope" value="Bacteria"/>
</dbReference>
<dbReference type="HOGENOM" id="CLU_037952_4_0_9"/>
<dbReference type="UniPathway" id="UPA00060"/>
<dbReference type="Proteomes" id="UP000000531">
    <property type="component" value="Chromosome"/>
</dbReference>
<dbReference type="GO" id="GO:0005829">
    <property type="term" value="C:cytosol"/>
    <property type="evidence" value="ECO:0007669"/>
    <property type="project" value="TreeGrafter"/>
</dbReference>
<dbReference type="GO" id="GO:0005524">
    <property type="term" value="F:ATP binding"/>
    <property type="evidence" value="ECO:0007669"/>
    <property type="project" value="UniProtKB-UniRule"/>
</dbReference>
<dbReference type="GO" id="GO:0004810">
    <property type="term" value="F:CCA tRNA nucleotidyltransferase activity"/>
    <property type="evidence" value="ECO:0007669"/>
    <property type="project" value="InterPro"/>
</dbReference>
<dbReference type="GO" id="GO:0000049">
    <property type="term" value="F:tRNA binding"/>
    <property type="evidence" value="ECO:0007669"/>
    <property type="project" value="UniProtKB-UniRule"/>
</dbReference>
<dbReference type="GO" id="GO:0140741">
    <property type="term" value="F:tRNA-uracil-4 sulfurtransferase activity"/>
    <property type="evidence" value="ECO:0007669"/>
    <property type="project" value="UniProtKB-EC"/>
</dbReference>
<dbReference type="GO" id="GO:0009228">
    <property type="term" value="P:thiamine biosynthetic process"/>
    <property type="evidence" value="ECO:0007669"/>
    <property type="project" value="UniProtKB-KW"/>
</dbReference>
<dbReference type="GO" id="GO:0009229">
    <property type="term" value="P:thiamine diphosphate biosynthetic process"/>
    <property type="evidence" value="ECO:0007669"/>
    <property type="project" value="UniProtKB-UniRule"/>
</dbReference>
<dbReference type="GO" id="GO:0052837">
    <property type="term" value="P:thiazole biosynthetic process"/>
    <property type="evidence" value="ECO:0007669"/>
    <property type="project" value="TreeGrafter"/>
</dbReference>
<dbReference type="GO" id="GO:0002937">
    <property type="term" value="P:tRNA 4-thiouridine biosynthesis"/>
    <property type="evidence" value="ECO:0007669"/>
    <property type="project" value="TreeGrafter"/>
</dbReference>
<dbReference type="CDD" id="cd01712">
    <property type="entry name" value="PPase_ThiI"/>
    <property type="match status" value="1"/>
</dbReference>
<dbReference type="CDD" id="cd11716">
    <property type="entry name" value="THUMP_ThiI"/>
    <property type="match status" value="1"/>
</dbReference>
<dbReference type="FunFam" id="3.40.50.620:FF:000053">
    <property type="entry name" value="Probable tRNA sulfurtransferase"/>
    <property type="match status" value="1"/>
</dbReference>
<dbReference type="Gene3D" id="3.30.2130.30">
    <property type="match status" value="1"/>
</dbReference>
<dbReference type="Gene3D" id="3.40.50.620">
    <property type="entry name" value="HUPs"/>
    <property type="match status" value="1"/>
</dbReference>
<dbReference type="HAMAP" id="MF_00021">
    <property type="entry name" value="ThiI"/>
    <property type="match status" value="1"/>
</dbReference>
<dbReference type="InterPro" id="IPR014729">
    <property type="entry name" value="Rossmann-like_a/b/a_fold"/>
</dbReference>
<dbReference type="InterPro" id="IPR020536">
    <property type="entry name" value="ThiI_AANH"/>
</dbReference>
<dbReference type="InterPro" id="IPR054173">
    <property type="entry name" value="ThiI_fer"/>
</dbReference>
<dbReference type="InterPro" id="IPR049961">
    <property type="entry name" value="ThiI_N"/>
</dbReference>
<dbReference type="InterPro" id="IPR004114">
    <property type="entry name" value="THUMP_dom"/>
</dbReference>
<dbReference type="InterPro" id="IPR049962">
    <property type="entry name" value="THUMP_ThiI"/>
</dbReference>
<dbReference type="InterPro" id="IPR003720">
    <property type="entry name" value="tRNA_STrfase"/>
</dbReference>
<dbReference type="InterPro" id="IPR050102">
    <property type="entry name" value="tRNA_sulfurtransferase_ThiI"/>
</dbReference>
<dbReference type="NCBIfam" id="TIGR00342">
    <property type="entry name" value="tRNA uracil 4-sulfurtransferase ThiI"/>
    <property type="match status" value="1"/>
</dbReference>
<dbReference type="PANTHER" id="PTHR43209">
    <property type="entry name" value="TRNA SULFURTRANSFERASE"/>
    <property type="match status" value="1"/>
</dbReference>
<dbReference type="PANTHER" id="PTHR43209:SF1">
    <property type="entry name" value="TRNA SULFURTRANSFERASE"/>
    <property type="match status" value="1"/>
</dbReference>
<dbReference type="Pfam" id="PF02568">
    <property type="entry name" value="ThiI"/>
    <property type="match status" value="1"/>
</dbReference>
<dbReference type="Pfam" id="PF22025">
    <property type="entry name" value="ThiI_fer"/>
    <property type="match status" value="1"/>
</dbReference>
<dbReference type="Pfam" id="PF02926">
    <property type="entry name" value="THUMP"/>
    <property type="match status" value="1"/>
</dbReference>
<dbReference type="SMART" id="SM00981">
    <property type="entry name" value="THUMP"/>
    <property type="match status" value="1"/>
</dbReference>
<dbReference type="SUPFAM" id="SSF52402">
    <property type="entry name" value="Adenine nucleotide alpha hydrolases-like"/>
    <property type="match status" value="1"/>
</dbReference>
<dbReference type="SUPFAM" id="SSF143437">
    <property type="entry name" value="THUMP domain-like"/>
    <property type="match status" value="1"/>
</dbReference>
<dbReference type="PROSITE" id="PS51165">
    <property type="entry name" value="THUMP"/>
    <property type="match status" value="1"/>
</dbReference>
<comment type="function">
    <text evidence="1">Catalyzes the ATP-dependent transfer of a sulfur to tRNA to produce 4-thiouridine in position 8 of tRNAs, which functions as a near-UV photosensor. Also catalyzes the transfer of sulfur to the sulfur carrier protein ThiS, forming ThiS-thiocarboxylate. This is a step in the synthesis of thiazole, in the thiamine biosynthesis pathway. The sulfur is donated as persulfide by IscS.</text>
</comment>
<comment type="catalytic activity">
    <reaction evidence="1">
        <text>[ThiI sulfur-carrier protein]-S-sulfanyl-L-cysteine + a uridine in tRNA + 2 reduced [2Fe-2S]-[ferredoxin] + ATP + H(+) = [ThiI sulfur-carrier protein]-L-cysteine + a 4-thiouridine in tRNA + 2 oxidized [2Fe-2S]-[ferredoxin] + AMP + diphosphate</text>
        <dbReference type="Rhea" id="RHEA:24176"/>
        <dbReference type="Rhea" id="RHEA-COMP:10000"/>
        <dbReference type="Rhea" id="RHEA-COMP:10001"/>
        <dbReference type="Rhea" id="RHEA-COMP:13337"/>
        <dbReference type="Rhea" id="RHEA-COMP:13338"/>
        <dbReference type="Rhea" id="RHEA-COMP:13339"/>
        <dbReference type="Rhea" id="RHEA-COMP:13340"/>
        <dbReference type="ChEBI" id="CHEBI:15378"/>
        <dbReference type="ChEBI" id="CHEBI:29950"/>
        <dbReference type="ChEBI" id="CHEBI:30616"/>
        <dbReference type="ChEBI" id="CHEBI:33019"/>
        <dbReference type="ChEBI" id="CHEBI:33737"/>
        <dbReference type="ChEBI" id="CHEBI:33738"/>
        <dbReference type="ChEBI" id="CHEBI:61963"/>
        <dbReference type="ChEBI" id="CHEBI:65315"/>
        <dbReference type="ChEBI" id="CHEBI:136798"/>
        <dbReference type="ChEBI" id="CHEBI:456215"/>
        <dbReference type="EC" id="2.8.1.4"/>
    </reaction>
</comment>
<comment type="catalytic activity">
    <reaction evidence="1">
        <text>[ThiS sulfur-carrier protein]-C-terminal Gly-Gly-AMP + S-sulfanyl-L-cysteinyl-[cysteine desulfurase] + AH2 = [ThiS sulfur-carrier protein]-C-terminal-Gly-aminoethanethioate + L-cysteinyl-[cysteine desulfurase] + A + AMP + 2 H(+)</text>
        <dbReference type="Rhea" id="RHEA:43340"/>
        <dbReference type="Rhea" id="RHEA-COMP:12157"/>
        <dbReference type="Rhea" id="RHEA-COMP:12158"/>
        <dbReference type="Rhea" id="RHEA-COMP:12910"/>
        <dbReference type="Rhea" id="RHEA-COMP:19908"/>
        <dbReference type="ChEBI" id="CHEBI:13193"/>
        <dbReference type="ChEBI" id="CHEBI:15378"/>
        <dbReference type="ChEBI" id="CHEBI:17499"/>
        <dbReference type="ChEBI" id="CHEBI:29950"/>
        <dbReference type="ChEBI" id="CHEBI:61963"/>
        <dbReference type="ChEBI" id="CHEBI:90618"/>
        <dbReference type="ChEBI" id="CHEBI:232372"/>
        <dbReference type="ChEBI" id="CHEBI:456215"/>
    </reaction>
</comment>
<comment type="pathway">
    <text evidence="1">Cofactor biosynthesis; thiamine diphosphate biosynthesis.</text>
</comment>
<comment type="subcellular location">
    <subcellularLocation>
        <location evidence="1">Cytoplasm</location>
    </subcellularLocation>
</comment>
<comment type="similarity">
    <text evidence="1">Belongs to the ThiI family.</text>
</comment>
<proteinExistence type="inferred from homology"/>
<gene>
    <name evidence="1" type="primary">thiI</name>
    <name type="ordered locus">SERP1279</name>
</gene>
<evidence type="ECO:0000255" key="1">
    <source>
        <dbReference type="HAMAP-Rule" id="MF_00021"/>
    </source>
</evidence>
<protein>
    <recommendedName>
        <fullName evidence="1">Probable tRNA sulfurtransferase</fullName>
        <ecNumber evidence="1">2.8.1.4</ecNumber>
    </recommendedName>
    <alternativeName>
        <fullName evidence="1">Sulfur carrier protein ThiS sulfurtransferase</fullName>
    </alternativeName>
    <alternativeName>
        <fullName evidence="1">Thiamine biosynthesis protein ThiI</fullName>
    </alternativeName>
    <alternativeName>
        <fullName evidence="1">tRNA 4-thiouridine synthase</fullName>
    </alternativeName>
</protein>
<accession>Q5HNJ0</accession>
<name>THII_STAEQ</name>
<sequence length="407" mass="46086">MQYDHLLVRYGELTLKGTNRKMFVNQLKDNVKRALIPLSGYHVKGKRDRMYIELSPEADINEIIQRLSKVYGIKSISPVIKIDKNEEKINQSAIQLSHDFEKGSTFKVDVKRVDKSFRLDTYELQRQVGGAILKENNNITVNVKNPDYEIKIEVRMDAIYIYEKVIAGAGGLPVGTGGKTLLMLSGGIDSPVAGIEVMKRGVTVEAIHFHSPPFTSEKAKDKVIELTRILAERVGPIKLHLVPFTEIQKQINKVVHPRYTMTSTRRMMMRISDKVVHQINANAIVNGENLGQVASQTLKSMYAINHVTATPVLRPLLTLDKEDIIKKAKELGTFETSIQPYEDCCTIFTPKNPVTEPDFDKVIKYESVFNFDEMIENAVENIETLTIDQNYKSAKEQSTDSLIKDLF</sequence>
<organism>
    <name type="scientific">Staphylococcus epidermidis (strain ATCC 35984 / DSM 28319 / BCRC 17069 / CCUG 31568 / BM 3577 / RP62A)</name>
    <dbReference type="NCBI Taxonomy" id="176279"/>
    <lineage>
        <taxon>Bacteria</taxon>
        <taxon>Bacillati</taxon>
        <taxon>Bacillota</taxon>
        <taxon>Bacilli</taxon>
        <taxon>Bacillales</taxon>
        <taxon>Staphylococcaceae</taxon>
        <taxon>Staphylococcus</taxon>
    </lineage>
</organism>